<reference key="1">
    <citation type="journal article" date="2008" name="Nature">
        <title>The genome of the simian and human malaria parasite Plasmodium knowlesi.</title>
        <authorList>
            <person name="Pain A."/>
            <person name="Boehme U."/>
            <person name="Berry A.E."/>
            <person name="Mungall K."/>
            <person name="Finn R.D."/>
            <person name="Jackson A.P."/>
            <person name="Mourier T."/>
            <person name="Mistry J."/>
            <person name="Pasini E.M."/>
            <person name="Aslett M.A."/>
            <person name="Balasubrammaniam S."/>
            <person name="Borgwardt K."/>
            <person name="Brooks K."/>
            <person name="Carret C."/>
            <person name="Carver T.J."/>
            <person name="Cherevach I."/>
            <person name="Chillingworth T."/>
            <person name="Clark T.G."/>
            <person name="Galinski M.R."/>
            <person name="Hall N."/>
            <person name="Harper D."/>
            <person name="Harris D."/>
            <person name="Hauser H."/>
            <person name="Ivens A."/>
            <person name="Janssen C.S."/>
            <person name="Keane T."/>
            <person name="Larke N."/>
            <person name="Lapp S."/>
            <person name="Marti M."/>
            <person name="Moule S."/>
            <person name="Meyer I.M."/>
            <person name="Ormond D."/>
            <person name="Peters N."/>
            <person name="Sanders M."/>
            <person name="Sanders S."/>
            <person name="Sargeant T.J."/>
            <person name="Simmonds M."/>
            <person name="Smith F."/>
            <person name="Squares R."/>
            <person name="Thurston S."/>
            <person name="Tivey A.R."/>
            <person name="Walker D."/>
            <person name="White B."/>
            <person name="Zuiderwijk E."/>
            <person name="Churcher C."/>
            <person name="Quail M.A."/>
            <person name="Cowman A.F."/>
            <person name="Turner C.M.R."/>
            <person name="Rajandream M.A."/>
            <person name="Kocken C.H.M."/>
            <person name="Thomas A.W."/>
            <person name="Newbold C.I."/>
            <person name="Barrell B.G."/>
            <person name="Berriman M."/>
        </authorList>
    </citation>
    <scope>NUCLEOTIDE SEQUENCE [LARGE SCALE GENOMIC DNA]</scope>
    <source>
        <strain>H</strain>
    </source>
</reference>
<keyword id="KW-0963">Cytoplasm</keyword>
<keyword id="KW-0342">GTP-binding</keyword>
<keyword id="KW-0436">Ligase</keyword>
<keyword id="KW-0460">Magnesium</keyword>
<keyword id="KW-0479">Metal-binding</keyword>
<keyword id="KW-0547">Nucleotide-binding</keyword>
<keyword id="KW-0658">Purine biosynthesis</keyword>
<keyword id="KW-1185">Reference proteome</keyword>
<organism>
    <name type="scientific">Plasmodium knowlesi (strain H)</name>
    <dbReference type="NCBI Taxonomy" id="5851"/>
    <lineage>
        <taxon>Eukaryota</taxon>
        <taxon>Sar</taxon>
        <taxon>Alveolata</taxon>
        <taxon>Apicomplexa</taxon>
        <taxon>Aconoidasida</taxon>
        <taxon>Haemosporida</taxon>
        <taxon>Plasmodiidae</taxon>
        <taxon>Plasmodium</taxon>
        <taxon>Plasmodium (Plasmodium)</taxon>
    </lineage>
</organism>
<sequence>MNIFEHDIQNLSQGNVVAILGSQWGDEGKGKIIDILSKHSDITCRFNGGANAGHTISVNDKKYALHLLPCGILYENNICVLGNGMVVHLKSLINEINSIGGNIIERLYLSDKSHILFDIHQTIDSIQENRKLKEGKQIGTTKRGIGPCYSTKVSRVGIRLGSLKNFEHFKNLYLKLIDNLMELYDIKDYNKEEELESFYKYHLLLKDRIIDVISFMNNRLNEKKNILIEGANAAMLDIDFGTYPYVTSSCTTVGGIFSGLGINHKKLNLTIGVVKSYLTRVGCGPFMTELNNEIGAYLREKGHEYGTTTKRPRRCGWLDIPMLLYVKCINSIDIINLTKLDVLSGLKEILLCVGYRSKGTGELLQKGCYPVDEDAPENYEPVYEQFQGWEEDISNCQTFEELPENAQKYVLAIEKYVDSPIVWIGVGPNRNNTITKK</sequence>
<feature type="chain" id="PRO_0000399295" description="Adenylosuccinate synthetase">
    <location>
        <begin position="1"/>
        <end position="437"/>
    </location>
</feature>
<feature type="active site" description="Proton acceptor" evidence="2">
    <location>
        <position position="26"/>
    </location>
</feature>
<feature type="active site" description="Proton donor" evidence="2">
    <location>
        <position position="54"/>
    </location>
</feature>
<feature type="binding site" evidence="2">
    <location>
        <begin position="25"/>
        <end position="31"/>
    </location>
    <ligand>
        <name>GTP</name>
        <dbReference type="ChEBI" id="CHEBI:37565"/>
    </ligand>
</feature>
<feature type="binding site" description="in other chain" evidence="2">
    <location>
        <begin position="26"/>
        <end position="29"/>
    </location>
    <ligand>
        <name>IMP</name>
        <dbReference type="ChEBI" id="CHEBI:58053"/>
        <note>ligand shared between dimeric partners</note>
    </ligand>
</feature>
<feature type="binding site" evidence="2">
    <location>
        <position position="26"/>
    </location>
    <ligand>
        <name>Mg(2+)</name>
        <dbReference type="ChEBI" id="CHEBI:18420"/>
    </ligand>
</feature>
<feature type="binding site" description="in other chain" evidence="2">
    <location>
        <begin position="51"/>
        <end position="54"/>
    </location>
    <ligand>
        <name>IMP</name>
        <dbReference type="ChEBI" id="CHEBI:58053"/>
        <note>ligand shared between dimeric partners</note>
    </ligand>
</feature>
<feature type="binding site" evidence="2">
    <location>
        <begin position="53"/>
        <end position="55"/>
    </location>
    <ligand>
        <name>GTP</name>
        <dbReference type="ChEBI" id="CHEBI:37565"/>
    </ligand>
</feature>
<feature type="binding site" evidence="2">
    <location>
        <position position="53"/>
    </location>
    <ligand>
        <name>Mg(2+)</name>
        <dbReference type="ChEBI" id="CHEBI:18420"/>
    </ligand>
</feature>
<feature type="binding site" evidence="2">
    <location>
        <position position="62"/>
    </location>
    <ligand>
        <name>GTP</name>
        <dbReference type="ChEBI" id="CHEBI:37565"/>
    </ligand>
</feature>
<feature type="binding site" description="in other chain" evidence="2">
    <location>
        <position position="141"/>
    </location>
    <ligand>
        <name>IMP</name>
        <dbReference type="ChEBI" id="CHEBI:58053"/>
        <note>ligand shared between dimeric partners</note>
    </ligand>
</feature>
<feature type="binding site" evidence="2">
    <location>
        <position position="155"/>
    </location>
    <ligand>
        <name>IMP</name>
        <dbReference type="ChEBI" id="CHEBI:58053"/>
        <note>ligand shared between dimeric partners</note>
    </ligand>
</feature>
<feature type="binding site" description="in other chain" evidence="2">
    <location>
        <position position="232"/>
    </location>
    <ligand>
        <name>IMP</name>
        <dbReference type="ChEBI" id="CHEBI:58053"/>
        <note>ligand shared between dimeric partners</note>
    </ligand>
</feature>
<feature type="binding site" description="in other chain" evidence="2">
    <location>
        <position position="247"/>
    </location>
    <ligand>
        <name>IMP</name>
        <dbReference type="ChEBI" id="CHEBI:58053"/>
        <note>ligand shared between dimeric partners</note>
    </ligand>
</feature>
<feature type="binding site" evidence="2">
    <location>
        <begin position="307"/>
        <end position="313"/>
    </location>
    <ligand>
        <name>substrate</name>
    </ligand>
</feature>
<feature type="binding site" evidence="2">
    <location>
        <position position="307"/>
    </location>
    <ligand>
        <name>GTP</name>
        <dbReference type="ChEBI" id="CHEBI:37565"/>
    </ligand>
</feature>
<feature type="binding site" description="in other chain" evidence="2">
    <location>
        <position position="311"/>
    </location>
    <ligand>
        <name>IMP</name>
        <dbReference type="ChEBI" id="CHEBI:58053"/>
        <note>ligand shared between dimeric partners</note>
    </ligand>
</feature>
<feature type="binding site" evidence="2">
    <location>
        <position position="313"/>
    </location>
    <ligand>
        <name>GTP</name>
        <dbReference type="ChEBI" id="CHEBI:37565"/>
    </ligand>
</feature>
<feature type="binding site" evidence="2">
    <location>
        <begin position="339"/>
        <end position="341"/>
    </location>
    <ligand>
        <name>GTP</name>
        <dbReference type="ChEBI" id="CHEBI:37565"/>
    </ligand>
</feature>
<feature type="binding site" evidence="2">
    <location>
        <begin position="425"/>
        <end position="427"/>
    </location>
    <ligand>
        <name>GTP</name>
        <dbReference type="ChEBI" id="CHEBI:37565"/>
    </ligand>
</feature>
<dbReference type="EC" id="6.3.4.4" evidence="2"/>
<dbReference type="EMBL" id="AM910993">
    <property type="protein sequence ID" value="CAQ40754.1"/>
    <property type="molecule type" value="Genomic_DNA"/>
</dbReference>
<dbReference type="RefSeq" id="XP_002261349.1">
    <property type="nucleotide sequence ID" value="XM_002261313.1"/>
</dbReference>
<dbReference type="SMR" id="B3L781"/>
<dbReference type="FunCoup" id="B3L781">
    <property type="interactions" value="346"/>
</dbReference>
<dbReference type="STRING" id="5851.B3L781"/>
<dbReference type="EnsemblProtists" id="CAQ40754">
    <property type="protein sequence ID" value="CAQ40754"/>
    <property type="gene ID" value="PKH_111670"/>
</dbReference>
<dbReference type="GeneID" id="7321848"/>
<dbReference type="KEGG" id="pkn:PKNH_1117300"/>
<dbReference type="VEuPathDB" id="PlasmoDB:PKNH_1117300"/>
<dbReference type="HOGENOM" id="CLU_029848_0_0_1"/>
<dbReference type="InParanoid" id="B3L781"/>
<dbReference type="OMA" id="FHHAKPI"/>
<dbReference type="OrthoDB" id="10265645at2759"/>
<dbReference type="PhylomeDB" id="B3L781"/>
<dbReference type="UniPathway" id="UPA00075">
    <property type="reaction ID" value="UER00335"/>
</dbReference>
<dbReference type="Proteomes" id="UP000031513">
    <property type="component" value="Chromosome 11"/>
</dbReference>
<dbReference type="GO" id="GO:0005737">
    <property type="term" value="C:cytoplasm"/>
    <property type="evidence" value="ECO:0007669"/>
    <property type="project" value="UniProtKB-SubCell"/>
</dbReference>
<dbReference type="GO" id="GO:0004019">
    <property type="term" value="F:adenylosuccinate synthase activity"/>
    <property type="evidence" value="ECO:0007669"/>
    <property type="project" value="UniProtKB-UniRule"/>
</dbReference>
<dbReference type="GO" id="GO:0005525">
    <property type="term" value="F:GTP binding"/>
    <property type="evidence" value="ECO:0007669"/>
    <property type="project" value="UniProtKB-UniRule"/>
</dbReference>
<dbReference type="GO" id="GO:0000287">
    <property type="term" value="F:magnesium ion binding"/>
    <property type="evidence" value="ECO:0007669"/>
    <property type="project" value="UniProtKB-UniRule"/>
</dbReference>
<dbReference type="GO" id="GO:0044208">
    <property type="term" value="P:'de novo' AMP biosynthetic process"/>
    <property type="evidence" value="ECO:0007669"/>
    <property type="project" value="UniProtKB-UniRule"/>
</dbReference>
<dbReference type="GO" id="GO:0046040">
    <property type="term" value="P:IMP metabolic process"/>
    <property type="evidence" value="ECO:0007669"/>
    <property type="project" value="TreeGrafter"/>
</dbReference>
<dbReference type="CDD" id="cd03108">
    <property type="entry name" value="AdSS"/>
    <property type="match status" value="1"/>
</dbReference>
<dbReference type="FunFam" id="3.90.170.10:FF:000001">
    <property type="entry name" value="Adenylosuccinate synthetase"/>
    <property type="match status" value="1"/>
</dbReference>
<dbReference type="Gene3D" id="3.40.440.10">
    <property type="entry name" value="Adenylosuccinate Synthetase, subunit A, domain 1"/>
    <property type="match status" value="1"/>
</dbReference>
<dbReference type="Gene3D" id="1.10.300.10">
    <property type="entry name" value="Adenylosuccinate Synthetase, subunit A, domain 2"/>
    <property type="match status" value="1"/>
</dbReference>
<dbReference type="Gene3D" id="3.90.170.10">
    <property type="entry name" value="Adenylosuccinate Synthetase, subunit A, domain 3"/>
    <property type="match status" value="1"/>
</dbReference>
<dbReference type="HAMAP" id="MF_00011">
    <property type="entry name" value="Adenylosucc_synth"/>
    <property type="match status" value="1"/>
</dbReference>
<dbReference type="InterPro" id="IPR018220">
    <property type="entry name" value="Adenylosuccin_syn_GTP-bd"/>
</dbReference>
<dbReference type="InterPro" id="IPR033128">
    <property type="entry name" value="Adenylosuccin_syn_Lys_AS"/>
</dbReference>
<dbReference type="InterPro" id="IPR042109">
    <property type="entry name" value="Adenylosuccinate_synth_dom1"/>
</dbReference>
<dbReference type="InterPro" id="IPR042110">
    <property type="entry name" value="Adenylosuccinate_synth_dom2"/>
</dbReference>
<dbReference type="InterPro" id="IPR042111">
    <property type="entry name" value="Adenylosuccinate_synth_dom3"/>
</dbReference>
<dbReference type="InterPro" id="IPR001114">
    <property type="entry name" value="Adenylosuccinate_synthetase"/>
</dbReference>
<dbReference type="InterPro" id="IPR027417">
    <property type="entry name" value="P-loop_NTPase"/>
</dbReference>
<dbReference type="NCBIfam" id="NF002223">
    <property type="entry name" value="PRK01117.1"/>
    <property type="match status" value="1"/>
</dbReference>
<dbReference type="NCBIfam" id="TIGR00184">
    <property type="entry name" value="purA"/>
    <property type="match status" value="1"/>
</dbReference>
<dbReference type="PANTHER" id="PTHR11846">
    <property type="entry name" value="ADENYLOSUCCINATE SYNTHETASE"/>
    <property type="match status" value="1"/>
</dbReference>
<dbReference type="PANTHER" id="PTHR11846:SF0">
    <property type="entry name" value="ADENYLOSUCCINATE SYNTHETASE"/>
    <property type="match status" value="1"/>
</dbReference>
<dbReference type="Pfam" id="PF00709">
    <property type="entry name" value="Adenylsucc_synt"/>
    <property type="match status" value="1"/>
</dbReference>
<dbReference type="SMART" id="SM00788">
    <property type="entry name" value="Adenylsucc_synt"/>
    <property type="match status" value="1"/>
</dbReference>
<dbReference type="SUPFAM" id="SSF52540">
    <property type="entry name" value="P-loop containing nucleoside triphosphate hydrolases"/>
    <property type="match status" value="1"/>
</dbReference>
<dbReference type="PROSITE" id="PS01266">
    <property type="entry name" value="ADENYLOSUCCIN_SYN_1"/>
    <property type="match status" value="1"/>
</dbReference>
<dbReference type="PROSITE" id="PS00513">
    <property type="entry name" value="ADENYLOSUCCIN_SYN_2"/>
    <property type="match status" value="1"/>
</dbReference>
<protein>
    <recommendedName>
        <fullName evidence="2">Adenylosuccinate synthetase</fullName>
        <shortName evidence="2">AMPSase</shortName>
        <shortName evidence="2">AdSS</shortName>
        <ecNumber evidence="2">6.3.4.4</ecNumber>
    </recommendedName>
    <alternativeName>
        <fullName evidence="2">IMP--aspartate ligase</fullName>
    </alternativeName>
</protein>
<gene>
    <name type="ORF">PKH_111670</name>
</gene>
<comment type="function">
    <text evidence="1">Plays an important role in the salvage pathway for purine nucleotide biosynthesis. Catalyzes the first committed step in the biosynthesis of AMP from IMP (By similarity).</text>
</comment>
<comment type="catalytic activity">
    <reaction evidence="2">
        <text>IMP + L-aspartate + GTP = N(6)-(1,2-dicarboxyethyl)-AMP + GDP + phosphate + 2 H(+)</text>
        <dbReference type="Rhea" id="RHEA:15753"/>
        <dbReference type="ChEBI" id="CHEBI:15378"/>
        <dbReference type="ChEBI" id="CHEBI:29991"/>
        <dbReference type="ChEBI" id="CHEBI:37565"/>
        <dbReference type="ChEBI" id="CHEBI:43474"/>
        <dbReference type="ChEBI" id="CHEBI:57567"/>
        <dbReference type="ChEBI" id="CHEBI:58053"/>
        <dbReference type="ChEBI" id="CHEBI:58189"/>
        <dbReference type="EC" id="6.3.4.4"/>
    </reaction>
</comment>
<comment type="cofactor">
    <cofactor evidence="2">
        <name>Mg(2+)</name>
        <dbReference type="ChEBI" id="CHEBI:18420"/>
    </cofactor>
    <text evidence="2">Binds 1 Mg(2+) ion per subunit.</text>
</comment>
<comment type="pathway">
    <text evidence="2">Purine metabolism; AMP biosynthesis via de novo pathway; AMP from IMP: step 1/2.</text>
</comment>
<comment type="subunit">
    <text evidence="2">Homodimer.</text>
</comment>
<comment type="subcellular location">
    <subcellularLocation>
        <location evidence="2">Cytoplasm</location>
    </subcellularLocation>
</comment>
<comment type="miscellaneous">
    <text>Parasitic protozoa lack the de novo purine biosynthesis pathway and rely exclusively on the salvage pathway for their purine nucleotide requirements.</text>
</comment>
<comment type="similarity">
    <text evidence="2">Belongs to the adenylosuccinate synthetase family.</text>
</comment>
<evidence type="ECO:0000250" key="1"/>
<evidence type="ECO:0000255" key="2">
    <source>
        <dbReference type="HAMAP-Rule" id="MF_03125"/>
    </source>
</evidence>
<proteinExistence type="inferred from homology"/>
<accession>B3L781</accession>
<name>PURA_PLAKH</name>